<feature type="chain" id="PRO_0000130573" description="Protein translation factor SUI1 homolog">
    <location>
        <begin position="1"/>
        <end position="113"/>
    </location>
</feature>
<comment type="function">
    <text>Probably involved in translation.</text>
</comment>
<comment type="similarity">
    <text evidence="1">Belongs to the SUI1 family.</text>
</comment>
<organism>
    <name type="scientific">Salix bakko</name>
    <name type="common">Japanese willow</name>
    <dbReference type="NCBI Taxonomy" id="72444"/>
    <lineage>
        <taxon>Eukaryota</taxon>
        <taxon>Viridiplantae</taxon>
        <taxon>Streptophyta</taxon>
        <taxon>Embryophyta</taxon>
        <taxon>Tracheophyta</taxon>
        <taxon>Spermatophyta</taxon>
        <taxon>Magnoliopsida</taxon>
        <taxon>eudicotyledons</taxon>
        <taxon>Gunneridae</taxon>
        <taxon>Pentapetalae</taxon>
        <taxon>rosids</taxon>
        <taxon>fabids</taxon>
        <taxon>Malpighiales</taxon>
        <taxon>Salicaceae</taxon>
        <taxon>Saliceae</taxon>
        <taxon>Salix</taxon>
    </lineage>
</organism>
<protein>
    <recommendedName>
        <fullName>Protein translation factor SUI1 homolog</fullName>
    </recommendedName>
</protein>
<sequence>MSEFDNAIPTAFDPFAEANAEDSGAGTKDYVHVRVQQRNGRKSLTTVQGLKKDYSYNKILKDLKKEFCCNGTVVQDPELGQVIQLQGDQRKNVSSFLVQAGIVKKENIKIHGF</sequence>
<reference key="1">
    <citation type="online journal article" date="1998" name="Plant Gene Register">
        <title>Molecular cloning of a cDNA encoding a homolog of the Yeast translation initiation factor SUI1 from the Japanese Willow (Salix bakko Kimura).</title>
        <authorList>
            <person name="Futamura N."/>
            <person name="Mori H."/>
            <person name="Shinohara K."/>
        </authorList>
        <locator>PGR98-011</locator>
    </citation>
    <scope>NUCLEOTIDE SEQUENCE [MRNA]</scope>
    <source>
        <tissue>Flower</tissue>
    </source>
</reference>
<name>SUI1_SALBA</name>
<evidence type="ECO:0000305" key="1"/>
<accession>O48650</accession>
<dbReference type="EMBL" id="AB003378">
    <property type="protein sequence ID" value="BAA24697.1"/>
    <property type="molecule type" value="mRNA"/>
</dbReference>
<dbReference type="SMR" id="O48650"/>
<dbReference type="GO" id="GO:0003743">
    <property type="term" value="F:translation initiation factor activity"/>
    <property type="evidence" value="ECO:0007669"/>
    <property type="project" value="InterPro"/>
</dbReference>
<dbReference type="GO" id="GO:0006417">
    <property type="term" value="P:regulation of translation"/>
    <property type="evidence" value="ECO:0007669"/>
    <property type="project" value="UniProtKB-KW"/>
</dbReference>
<dbReference type="CDD" id="cd11566">
    <property type="entry name" value="eIF1_SUI1"/>
    <property type="match status" value="1"/>
</dbReference>
<dbReference type="FunFam" id="3.30.780.10:FF:000001">
    <property type="entry name" value="Eukaryotic translation initiation factor SUI1"/>
    <property type="match status" value="1"/>
</dbReference>
<dbReference type="Gene3D" id="3.30.780.10">
    <property type="entry name" value="SUI1-like domain"/>
    <property type="match status" value="1"/>
</dbReference>
<dbReference type="InterPro" id="IPR001950">
    <property type="entry name" value="SUI1"/>
</dbReference>
<dbReference type="InterPro" id="IPR036877">
    <property type="entry name" value="SUI1_dom_sf"/>
</dbReference>
<dbReference type="InterPro" id="IPR005874">
    <property type="entry name" value="SUI1_euk"/>
</dbReference>
<dbReference type="NCBIfam" id="TIGR01160">
    <property type="entry name" value="SUI1_MOF2"/>
    <property type="match status" value="1"/>
</dbReference>
<dbReference type="PANTHER" id="PTHR10388">
    <property type="entry name" value="EUKARYOTIC TRANSLATION INITIATION FACTOR SUI1"/>
    <property type="match status" value="1"/>
</dbReference>
<dbReference type="Pfam" id="PF01253">
    <property type="entry name" value="SUI1"/>
    <property type="match status" value="1"/>
</dbReference>
<dbReference type="PIRSF" id="PIRSF004499">
    <property type="entry name" value="SUI1_euk"/>
    <property type="match status" value="1"/>
</dbReference>
<dbReference type="SUPFAM" id="SSF55159">
    <property type="entry name" value="eIF1-like"/>
    <property type="match status" value="1"/>
</dbReference>
<dbReference type="PROSITE" id="PS50296">
    <property type="entry name" value="SUI1"/>
    <property type="match status" value="1"/>
</dbReference>
<proteinExistence type="inferred from homology"/>
<keyword id="KW-0648">Protein biosynthesis</keyword>
<keyword id="KW-0810">Translation regulation</keyword>